<gene>
    <name evidence="1" type="primary">rpmG</name>
    <name type="ordered locus">Sbal195_0390</name>
</gene>
<dbReference type="EMBL" id="CP000891">
    <property type="protein sequence ID" value="ABX47571.1"/>
    <property type="molecule type" value="Genomic_DNA"/>
</dbReference>
<dbReference type="RefSeq" id="WP_006079871.1">
    <property type="nucleotide sequence ID" value="NC_009997.1"/>
</dbReference>
<dbReference type="SMR" id="A9KY06"/>
<dbReference type="GeneID" id="94729699"/>
<dbReference type="KEGG" id="sbn:Sbal195_0390"/>
<dbReference type="HOGENOM" id="CLU_190949_1_1_6"/>
<dbReference type="Proteomes" id="UP000000770">
    <property type="component" value="Chromosome"/>
</dbReference>
<dbReference type="GO" id="GO:0022625">
    <property type="term" value="C:cytosolic large ribosomal subunit"/>
    <property type="evidence" value="ECO:0007669"/>
    <property type="project" value="TreeGrafter"/>
</dbReference>
<dbReference type="GO" id="GO:0003735">
    <property type="term" value="F:structural constituent of ribosome"/>
    <property type="evidence" value="ECO:0007669"/>
    <property type="project" value="InterPro"/>
</dbReference>
<dbReference type="GO" id="GO:0006412">
    <property type="term" value="P:translation"/>
    <property type="evidence" value="ECO:0007669"/>
    <property type="project" value="UniProtKB-UniRule"/>
</dbReference>
<dbReference type="FunFam" id="2.20.28.120:FF:000001">
    <property type="entry name" value="50S ribosomal protein L33"/>
    <property type="match status" value="1"/>
</dbReference>
<dbReference type="Gene3D" id="2.20.28.120">
    <property type="entry name" value="Ribosomal protein L33"/>
    <property type="match status" value="1"/>
</dbReference>
<dbReference type="HAMAP" id="MF_00294">
    <property type="entry name" value="Ribosomal_bL33"/>
    <property type="match status" value="1"/>
</dbReference>
<dbReference type="InterPro" id="IPR001705">
    <property type="entry name" value="Ribosomal_bL33"/>
</dbReference>
<dbReference type="InterPro" id="IPR018264">
    <property type="entry name" value="Ribosomal_bL33_CS"/>
</dbReference>
<dbReference type="InterPro" id="IPR038584">
    <property type="entry name" value="Ribosomal_bL33_sf"/>
</dbReference>
<dbReference type="InterPro" id="IPR011332">
    <property type="entry name" value="Ribosomal_zn-bd"/>
</dbReference>
<dbReference type="NCBIfam" id="NF001860">
    <property type="entry name" value="PRK00595.1"/>
    <property type="match status" value="1"/>
</dbReference>
<dbReference type="NCBIfam" id="TIGR01023">
    <property type="entry name" value="rpmG_bact"/>
    <property type="match status" value="1"/>
</dbReference>
<dbReference type="PANTHER" id="PTHR15238">
    <property type="entry name" value="54S RIBOSOMAL PROTEIN L39, MITOCHONDRIAL"/>
    <property type="match status" value="1"/>
</dbReference>
<dbReference type="PANTHER" id="PTHR15238:SF1">
    <property type="entry name" value="LARGE RIBOSOMAL SUBUNIT PROTEIN BL33M"/>
    <property type="match status" value="1"/>
</dbReference>
<dbReference type="Pfam" id="PF00471">
    <property type="entry name" value="Ribosomal_L33"/>
    <property type="match status" value="1"/>
</dbReference>
<dbReference type="SUPFAM" id="SSF57829">
    <property type="entry name" value="Zn-binding ribosomal proteins"/>
    <property type="match status" value="1"/>
</dbReference>
<dbReference type="PROSITE" id="PS00582">
    <property type="entry name" value="RIBOSOMAL_L33"/>
    <property type="match status" value="1"/>
</dbReference>
<protein>
    <recommendedName>
        <fullName evidence="1">Large ribosomal subunit protein bL33</fullName>
    </recommendedName>
    <alternativeName>
        <fullName evidence="2">50S ribosomal protein L33</fullName>
    </alternativeName>
</protein>
<evidence type="ECO:0000255" key="1">
    <source>
        <dbReference type="HAMAP-Rule" id="MF_00294"/>
    </source>
</evidence>
<evidence type="ECO:0000305" key="2"/>
<comment type="similarity">
    <text evidence="1">Belongs to the bacterial ribosomal protein bL33 family.</text>
</comment>
<reference key="1">
    <citation type="submission" date="2007-11" db="EMBL/GenBank/DDBJ databases">
        <title>Complete sequence of chromosome of Shewanella baltica OS195.</title>
        <authorList>
            <consortium name="US DOE Joint Genome Institute"/>
            <person name="Copeland A."/>
            <person name="Lucas S."/>
            <person name="Lapidus A."/>
            <person name="Barry K."/>
            <person name="Glavina del Rio T."/>
            <person name="Dalin E."/>
            <person name="Tice H."/>
            <person name="Pitluck S."/>
            <person name="Chain P."/>
            <person name="Malfatti S."/>
            <person name="Shin M."/>
            <person name="Vergez L."/>
            <person name="Schmutz J."/>
            <person name="Larimer F."/>
            <person name="Land M."/>
            <person name="Hauser L."/>
            <person name="Kyrpides N."/>
            <person name="Kim E."/>
            <person name="Brettar I."/>
            <person name="Rodrigues J."/>
            <person name="Konstantinidis K."/>
            <person name="Klappenbach J."/>
            <person name="Hofle M."/>
            <person name="Tiedje J."/>
            <person name="Richardson P."/>
        </authorList>
    </citation>
    <scope>NUCLEOTIDE SEQUENCE [LARGE SCALE GENOMIC DNA]</scope>
    <source>
        <strain>OS195</strain>
    </source>
</reference>
<name>RL33_SHEB9</name>
<proteinExistence type="inferred from homology"/>
<accession>A9KY06</accession>
<sequence length="57" mass="6733">MAKAKGNREKIKLVSTAKTGHFYTTEKNKRNMPEKMEIKKFDPVIRQHVIYKEAKIK</sequence>
<keyword id="KW-0687">Ribonucleoprotein</keyword>
<keyword id="KW-0689">Ribosomal protein</keyword>
<feature type="chain" id="PRO_0000356655" description="Large ribosomal subunit protein bL33">
    <location>
        <begin position="1"/>
        <end position="57"/>
    </location>
</feature>
<organism>
    <name type="scientific">Shewanella baltica (strain OS195)</name>
    <dbReference type="NCBI Taxonomy" id="399599"/>
    <lineage>
        <taxon>Bacteria</taxon>
        <taxon>Pseudomonadati</taxon>
        <taxon>Pseudomonadota</taxon>
        <taxon>Gammaproteobacteria</taxon>
        <taxon>Alteromonadales</taxon>
        <taxon>Shewanellaceae</taxon>
        <taxon>Shewanella</taxon>
    </lineage>
</organism>